<dbReference type="EC" id="6.3.5.-" evidence="1"/>
<dbReference type="EMBL" id="CP001056">
    <property type="protein sequence ID" value="ACD24037.1"/>
    <property type="molecule type" value="Genomic_DNA"/>
</dbReference>
<dbReference type="SMR" id="B2TIZ8"/>
<dbReference type="KEGG" id="cbk:CLL_A0410"/>
<dbReference type="PATRIC" id="fig|935198.13.peg.387"/>
<dbReference type="HOGENOM" id="CLU_105899_2_1_9"/>
<dbReference type="Proteomes" id="UP000001195">
    <property type="component" value="Chromosome"/>
</dbReference>
<dbReference type="GO" id="GO:0050566">
    <property type="term" value="F:asparaginyl-tRNA synthase (glutamine-hydrolyzing) activity"/>
    <property type="evidence" value="ECO:0007669"/>
    <property type="project" value="RHEA"/>
</dbReference>
<dbReference type="GO" id="GO:0005524">
    <property type="term" value="F:ATP binding"/>
    <property type="evidence" value="ECO:0007669"/>
    <property type="project" value="UniProtKB-KW"/>
</dbReference>
<dbReference type="GO" id="GO:0050567">
    <property type="term" value="F:glutaminyl-tRNA synthase (glutamine-hydrolyzing) activity"/>
    <property type="evidence" value="ECO:0007669"/>
    <property type="project" value="UniProtKB-UniRule"/>
</dbReference>
<dbReference type="GO" id="GO:0070681">
    <property type="term" value="P:glutaminyl-tRNAGln biosynthesis via transamidation"/>
    <property type="evidence" value="ECO:0007669"/>
    <property type="project" value="TreeGrafter"/>
</dbReference>
<dbReference type="GO" id="GO:0006450">
    <property type="term" value="P:regulation of translational fidelity"/>
    <property type="evidence" value="ECO:0007669"/>
    <property type="project" value="InterPro"/>
</dbReference>
<dbReference type="GO" id="GO:0006412">
    <property type="term" value="P:translation"/>
    <property type="evidence" value="ECO:0007669"/>
    <property type="project" value="UniProtKB-UniRule"/>
</dbReference>
<dbReference type="Gene3D" id="1.10.20.60">
    <property type="entry name" value="Glu-tRNAGln amidotransferase C subunit, N-terminal domain"/>
    <property type="match status" value="1"/>
</dbReference>
<dbReference type="HAMAP" id="MF_00122">
    <property type="entry name" value="GatC"/>
    <property type="match status" value="1"/>
</dbReference>
<dbReference type="InterPro" id="IPR036113">
    <property type="entry name" value="Asp/Glu-ADT_sf_sub_c"/>
</dbReference>
<dbReference type="InterPro" id="IPR003837">
    <property type="entry name" value="GatC"/>
</dbReference>
<dbReference type="NCBIfam" id="TIGR00135">
    <property type="entry name" value="gatC"/>
    <property type="match status" value="1"/>
</dbReference>
<dbReference type="PANTHER" id="PTHR15004">
    <property type="entry name" value="GLUTAMYL-TRNA(GLN) AMIDOTRANSFERASE SUBUNIT C, MITOCHONDRIAL"/>
    <property type="match status" value="1"/>
</dbReference>
<dbReference type="PANTHER" id="PTHR15004:SF0">
    <property type="entry name" value="GLUTAMYL-TRNA(GLN) AMIDOTRANSFERASE SUBUNIT C, MITOCHONDRIAL"/>
    <property type="match status" value="1"/>
</dbReference>
<dbReference type="Pfam" id="PF02686">
    <property type="entry name" value="GatC"/>
    <property type="match status" value="1"/>
</dbReference>
<dbReference type="SUPFAM" id="SSF141000">
    <property type="entry name" value="Glu-tRNAGln amidotransferase C subunit"/>
    <property type="match status" value="1"/>
</dbReference>
<feature type="chain" id="PRO_1000095276" description="Aspartyl/glutamyl-tRNA(Asn/Gln) amidotransferase subunit C">
    <location>
        <begin position="1"/>
        <end position="97"/>
    </location>
</feature>
<sequence length="97" mass="11394">MSVTKKDVEYVAELARLSFNEDEKESLASDLNQILNYVEKLQELDTEKEDIIVNPYYIENKFREDEITPSIKLEEVLENAPKTLEEYVLVPTIIREQ</sequence>
<organism>
    <name type="scientific">Clostridium botulinum (strain Eklund 17B / Type B)</name>
    <dbReference type="NCBI Taxonomy" id="935198"/>
    <lineage>
        <taxon>Bacteria</taxon>
        <taxon>Bacillati</taxon>
        <taxon>Bacillota</taxon>
        <taxon>Clostridia</taxon>
        <taxon>Eubacteriales</taxon>
        <taxon>Clostridiaceae</taxon>
        <taxon>Clostridium</taxon>
    </lineage>
</organism>
<proteinExistence type="inferred from homology"/>
<name>GATC_CLOBB</name>
<keyword id="KW-0067">ATP-binding</keyword>
<keyword id="KW-0436">Ligase</keyword>
<keyword id="KW-0547">Nucleotide-binding</keyword>
<keyword id="KW-0648">Protein biosynthesis</keyword>
<evidence type="ECO:0000255" key="1">
    <source>
        <dbReference type="HAMAP-Rule" id="MF_00122"/>
    </source>
</evidence>
<gene>
    <name evidence="1" type="primary">gatC</name>
    <name type="ordered locus">CLL_A0410</name>
</gene>
<reference key="1">
    <citation type="submission" date="2008-04" db="EMBL/GenBank/DDBJ databases">
        <title>Complete sequence of Clostridium botulinum strain Eklund.</title>
        <authorList>
            <person name="Brinkac L.M."/>
            <person name="Brown J.L."/>
            <person name="Bruce D."/>
            <person name="Detter C."/>
            <person name="Munk C."/>
            <person name="Smith L.A."/>
            <person name="Smith T.J."/>
            <person name="Sutton G."/>
            <person name="Brettin T.S."/>
        </authorList>
    </citation>
    <scope>NUCLEOTIDE SEQUENCE [LARGE SCALE GENOMIC DNA]</scope>
    <source>
        <strain>Eklund 17B / Type B</strain>
    </source>
</reference>
<protein>
    <recommendedName>
        <fullName evidence="1">Aspartyl/glutamyl-tRNA(Asn/Gln) amidotransferase subunit C</fullName>
        <shortName evidence="1">Asp/Glu-ADT subunit C</shortName>
        <ecNumber evidence="1">6.3.5.-</ecNumber>
    </recommendedName>
</protein>
<comment type="function">
    <text evidence="1">Allows the formation of correctly charged Asn-tRNA(Asn) or Gln-tRNA(Gln) through the transamidation of misacylated Asp-tRNA(Asn) or Glu-tRNA(Gln) in organisms which lack either or both of asparaginyl-tRNA or glutaminyl-tRNA synthetases. The reaction takes place in the presence of glutamine and ATP through an activated phospho-Asp-tRNA(Asn) or phospho-Glu-tRNA(Gln).</text>
</comment>
<comment type="catalytic activity">
    <reaction evidence="1">
        <text>L-glutamyl-tRNA(Gln) + L-glutamine + ATP + H2O = L-glutaminyl-tRNA(Gln) + L-glutamate + ADP + phosphate + H(+)</text>
        <dbReference type="Rhea" id="RHEA:17521"/>
        <dbReference type="Rhea" id="RHEA-COMP:9681"/>
        <dbReference type="Rhea" id="RHEA-COMP:9684"/>
        <dbReference type="ChEBI" id="CHEBI:15377"/>
        <dbReference type="ChEBI" id="CHEBI:15378"/>
        <dbReference type="ChEBI" id="CHEBI:29985"/>
        <dbReference type="ChEBI" id="CHEBI:30616"/>
        <dbReference type="ChEBI" id="CHEBI:43474"/>
        <dbReference type="ChEBI" id="CHEBI:58359"/>
        <dbReference type="ChEBI" id="CHEBI:78520"/>
        <dbReference type="ChEBI" id="CHEBI:78521"/>
        <dbReference type="ChEBI" id="CHEBI:456216"/>
    </reaction>
</comment>
<comment type="catalytic activity">
    <reaction evidence="1">
        <text>L-aspartyl-tRNA(Asn) + L-glutamine + ATP + H2O = L-asparaginyl-tRNA(Asn) + L-glutamate + ADP + phosphate + 2 H(+)</text>
        <dbReference type="Rhea" id="RHEA:14513"/>
        <dbReference type="Rhea" id="RHEA-COMP:9674"/>
        <dbReference type="Rhea" id="RHEA-COMP:9677"/>
        <dbReference type="ChEBI" id="CHEBI:15377"/>
        <dbReference type="ChEBI" id="CHEBI:15378"/>
        <dbReference type="ChEBI" id="CHEBI:29985"/>
        <dbReference type="ChEBI" id="CHEBI:30616"/>
        <dbReference type="ChEBI" id="CHEBI:43474"/>
        <dbReference type="ChEBI" id="CHEBI:58359"/>
        <dbReference type="ChEBI" id="CHEBI:78515"/>
        <dbReference type="ChEBI" id="CHEBI:78516"/>
        <dbReference type="ChEBI" id="CHEBI:456216"/>
    </reaction>
</comment>
<comment type="subunit">
    <text evidence="1">Heterotrimer of A, B and C subunits.</text>
</comment>
<comment type="similarity">
    <text evidence="1">Belongs to the GatC family.</text>
</comment>
<accession>B2TIZ8</accession>